<sequence length="94" mass="10679">MTKSELIERLCAEQTHLSAKEVEDAVKDILEHMASTLESGDRIEIRGFGSFSLHYREPRVGRNPKTGDKVELEGKYVPHFKPGKELRERVNLGS</sequence>
<keyword id="KW-0233">DNA recombination</keyword>
<keyword id="KW-0238">DNA-binding</keyword>
<keyword id="KW-0804">Transcription</keyword>
<keyword id="KW-0805">Transcription regulation</keyword>
<keyword id="KW-0810">Translation regulation</keyword>
<evidence type="ECO:0000255" key="1">
    <source>
        <dbReference type="HAMAP-Rule" id="MF_00381"/>
    </source>
</evidence>
<gene>
    <name evidence="1" type="primary">ihfB</name>
    <name evidence="1" type="synonym">himD</name>
    <name type="ordered locus">VIBHAR_02859</name>
</gene>
<proteinExistence type="inferred from homology"/>
<protein>
    <recommendedName>
        <fullName evidence="1">Integration host factor subunit beta</fullName>
        <shortName evidence="1">IHF-beta</shortName>
    </recommendedName>
</protein>
<organism>
    <name type="scientific">Vibrio campbellii (strain ATCC BAA-1116)</name>
    <dbReference type="NCBI Taxonomy" id="2902295"/>
    <lineage>
        <taxon>Bacteria</taxon>
        <taxon>Pseudomonadati</taxon>
        <taxon>Pseudomonadota</taxon>
        <taxon>Gammaproteobacteria</taxon>
        <taxon>Vibrionales</taxon>
        <taxon>Vibrionaceae</taxon>
        <taxon>Vibrio</taxon>
    </lineage>
</organism>
<comment type="function">
    <text evidence="1">This protein is one of the two subunits of integration host factor, a specific DNA-binding protein that functions in genetic recombination as well as in transcriptional and translational control.</text>
</comment>
<comment type="subunit">
    <text evidence="1">Heterodimer of an alpha and a beta chain.</text>
</comment>
<comment type="similarity">
    <text evidence="1">Belongs to the bacterial histone-like protein family.</text>
</comment>
<dbReference type="EMBL" id="CP000789">
    <property type="protein sequence ID" value="ABU71812.1"/>
    <property type="molecule type" value="Genomic_DNA"/>
</dbReference>
<dbReference type="RefSeq" id="WP_005431133.1">
    <property type="nucleotide sequence ID" value="NC_022269.1"/>
</dbReference>
<dbReference type="SMR" id="A7MUP0"/>
<dbReference type="GeneID" id="67376810"/>
<dbReference type="KEGG" id="vha:VIBHAR_02859"/>
<dbReference type="PATRIC" id="fig|338187.25.peg.3326"/>
<dbReference type="Proteomes" id="UP000008152">
    <property type="component" value="Chromosome I"/>
</dbReference>
<dbReference type="GO" id="GO:0005694">
    <property type="term" value="C:chromosome"/>
    <property type="evidence" value="ECO:0007669"/>
    <property type="project" value="InterPro"/>
</dbReference>
<dbReference type="GO" id="GO:0005829">
    <property type="term" value="C:cytosol"/>
    <property type="evidence" value="ECO:0007669"/>
    <property type="project" value="TreeGrafter"/>
</dbReference>
<dbReference type="GO" id="GO:0003677">
    <property type="term" value="F:DNA binding"/>
    <property type="evidence" value="ECO:0007669"/>
    <property type="project" value="UniProtKB-UniRule"/>
</dbReference>
<dbReference type="GO" id="GO:0030527">
    <property type="term" value="F:structural constituent of chromatin"/>
    <property type="evidence" value="ECO:0007669"/>
    <property type="project" value="InterPro"/>
</dbReference>
<dbReference type="GO" id="GO:0006310">
    <property type="term" value="P:DNA recombination"/>
    <property type="evidence" value="ECO:0007669"/>
    <property type="project" value="UniProtKB-UniRule"/>
</dbReference>
<dbReference type="GO" id="GO:1905087">
    <property type="term" value="P:positive regulation of bioluminescence"/>
    <property type="evidence" value="ECO:0000315"/>
    <property type="project" value="CACAO"/>
</dbReference>
<dbReference type="GO" id="GO:0006355">
    <property type="term" value="P:regulation of DNA-templated transcription"/>
    <property type="evidence" value="ECO:0007669"/>
    <property type="project" value="UniProtKB-UniRule"/>
</dbReference>
<dbReference type="GO" id="GO:0006417">
    <property type="term" value="P:regulation of translation"/>
    <property type="evidence" value="ECO:0007669"/>
    <property type="project" value="UniProtKB-UniRule"/>
</dbReference>
<dbReference type="CDD" id="cd13836">
    <property type="entry name" value="IHF_B"/>
    <property type="match status" value="1"/>
</dbReference>
<dbReference type="FunFam" id="4.10.520.10:FF:000003">
    <property type="entry name" value="Integration host factor subunit beta"/>
    <property type="match status" value="1"/>
</dbReference>
<dbReference type="Gene3D" id="4.10.520.10">
    <property type="entry name" value="IHF-like DNA-binding proteins"/>
    <property type="match status" value="1"/>
</dbReference>
<dbReference type="HAMAP" id="MF_00381">
    <property type="entry name" value="IHF_beta"/>
    <property type="match status" value="1"/>
</dbReference>
<dbReference type="InterPro" id="IPR000119">
    <property type="entry name" value="Hist_DNA-bd"/>
</dbReference>
<dbReference type="InterPro" id="IPR020816">
    <property type="entry name" value="Histone-like_DNA-bd_CS"/>
</dbReference>
<dbReference type="InterPro" id="IPR010992">
    <property type="entry name" value="IHF-like_DNA-bd_dom_sf"/>
</dbReference>
<dbReference type="InterPro" id="IPR005685">
    <property type="entry name" value="IHF_beta"/>
</dbReference>
<dbReference type="NCBIfam" id="TIGR00988">
    <property type="entry name" value="hip"/>
    <property type="match status" value="1"/>
</dbReference>
<dbReference type="NCBIfam" id="NF001222">
    <property type="entry name" value="PRK00199.1"/>
    <property type="match status" value="1"/>
</dbReference>
<dbReference type="PANTHER" id="PTHR33175">
    <property type="entry name" value="DNA-BINDING PROTEIN HU"/>
    <property type="match status" value="1"/>
</dbReference>
<dbReference type="PANTHER" id="PTHR33175:SF5">
    <property type="entry name" value="INTEGRATION HOST FACTOR SUBUNIT BETA"/>
    <property type="match status" value="1"/>
</dbReference>
<dbReference type="Pfam" id="PF00216">
    <property type="entry name" value="Bac_DNA_binding"/>
    <property type="match status" value="1"/>
</dbReference>
<dbReference type="PRINTS" id="PR01727">
    <property type="entry name" value="DNABINDINGHU"/>
</dbReference>
<dbReference type="SMART" id="SM00411">
    <property type="entry name" value="BHL"/>
    <property type="match status" value="1"/>
</dbReference>
<dbReference type="SUPFAM" id="SSF47729">
    <property type="entry name" value="IHF-like DNA-binding proteins"/>
    <property type="match status" value="1"/>
</dbReference>
<dbReference type="PROSITE" id="PS00045">
    <property type="entry name" value="HISTONE_LIKE"/>
    <property type="match status" value="1"/>
</dbReference>
<feature type="chain" id="PRO_1000060674" description="Integration host factor subunit beta">
    <location>
        <begin position="1"/>
        <end position="94"/>
    </location>
</feature>
<accession>A7MUP0</accession>
<name>IHFB_VIBC1</name>
<reference key="1">
    <citation type="submission" date="2007-08" db="EMBL/GenBank/DDBJ databases">
        <authorList>
            <consortium name="The Vibrio harveyi Genome Sequencing Project"/>
            <person name="Bassler B."/>
            <person name="Clifton S.W."/>
            <person name="Fulton L."/>
            <person name="Delehaunty K."/>
            <person name="Fronick C."/>
            <person name="Harrison M."/>
            <person name="Markivic C."/>
            <person name="Fulton R."/>
            <person name="Tin-Wollam A.-M."/>
            <person name="Shah N."/>
            <person name="Pepin K."/>
            <person name="Nash W."/>
            <person name="Thiruvilangam P."/>
            <person name="Bhonagiri V."/>
            <person name="Waters C."/>
            <person name="Tu K.C."/>
            <person name="Irgon J."/>
            <person name="Wilson R.K."/>
        </authorList>
    </citation>
    <scope>NUCLEOTIDE SEQUENCE [LARGE SCALE GENOMIC DNA]</scope>
    <source>
        <strain>ATCC BAA-1116 / BB120</strain>
    </source>
</reference>